<sequence>MKPGIHPEYGKARVICACGETFETGSTKKEIRVEICSKCHPFYTGSQRTVEARGRAEQFKKKYGL</sequence>
<name>RL31_CARHZ</name>
<protein>
    <recommendedName>
        <fullName evidence="1">Large ribosomal subunit protein bL31</fullName>
    </recommendedName>
    <alternativeName>
        <fullName evidence="2">50S ribosomal protein L31</fullName>
    </alternativeName>
</protein>
<keyword id="KW-0479">Metal-binding</keyword>
<keyword id="KW-1185">Reference proteome</keyword>
<keyword id="KW-0687">Ribonucleoprotein</keyword>
<keyword id="KW-0689">Ribosomal protein</keyword>
<keyword id="KW-0694">RNA-binding</keyword>
<keyword id="KW-0699">rRNA-binding</keyword>
<keyword id="KW-0862">Zinc</keyword>
<evidence type="ECO:0000255" key="1">
    <source>
        <dbReference type="HAMAP-Rule" id="MF_00501"/>
    </source>
</evidence>
<evidence type="ECO:0000305" key="2"/>
<comment type="function">
    <text evidence="1">Binds the 23S rRNA.</text>
</comment>
<comment type="cofactor">
    <cofactor evidence="1">
        <name>Zn(2+)</name>
        <dbReference type="ChEBI" id="CHEBI:29105"/>
    </cofactor>
    <text evidence="1">Binds 1 zinc ion per subunit.</text>
</comment>
<comment type="subunit">
    <text evidence="1">Part of the 50S ribosomal subunit.</text>
</comment>
<comment type="similarity">
    <text evidence="1">Belongs to the bacterial ribosomal protein bL31 family. Type A subfamily.</text>
</comment>
<reference key="1">
    <citation type="journal article" date="2005" name="PLoS Genet.">
        <title>Life in hot carbon monoxide: the complete genome sequence of Carboxydothermus hydrogenoformans Z-2901.</title>
        <authorList>
            <person name="Wu M."/>
            <person name="Ren Q."/>
            <person name="Durkin A.S."/>
            <person name="Daugherty S.C."/>
            <person name="Brinkac L.M."/>
            <person name="Dodson R.J."/>
            <person name="Madupu R."/>
            <person name="Sullivan S.A."/>
            <person name="Kolonay J.F."/>
            <person name="Nelson W.C."/>
            <person name="Tallon L.J."/>
            <person name="Jones K.M."/>
            <person name="Ulrich L.E."/>
            <person name="Gonzalez J.M."/>
            <person name="Zhulin I.B."/>
            <person name="Robb F.T."/>
            <person name="Eisen J.A."/>
        </authorList>
    </citation>
    <scope>NUCLEOTIDE SEQUENCE [LARGE SCALE GENOMIC DNA]</scope>
    <source>
        <strain>ATCC BAA-161 / DSM 6008 / Z-2901</strain>
    </source>
</reference>
<dbReference type="EMBL" id="CP000141">
    <property type="protein sequence ID" value="ABB15749.1"/>
    <property type="molecule type" value="Genomic_DNA"/>
</dbReference>
<dbReference type="RefSeq" id="WP_011345431.1">
    <property type="nucleotide sequence ID" value="NC_007503.1"/>
</dbReference>
<dbReference type="SMR" id="Q3A926"/>
<dbReference type="FunCoup" id="Q3A926">
    <property type="interactions" value="293"/>
</dbReference>
<dbReference type="STRING" id="246194.CHY_2565"/>
<dbReference type="KEGG" id="chy:CHY_2565"/>
<dbReference type="eggNOG" id="COG0254">
    <property type="taxonomic scope" value="Bacteria"/>
</dbReference>
<dbReference type="HOGENOM" id="CLU_114306_4_3_9"/>
<dbReference type="InParanoid" id="Q3A926"/>
<dbReference type="OrthoDB" id="9803251at2"/>
<dbReference type="Proteomes" id="UP000002706">
    <property type="component" value="Chromosome"/>
</dbReference>
<dbReference type="GO" id="GO:1990904">
    <property type="term" value="C:ribonucleoprotein complex"/>
    <property type="evidence" value="ECO:0007669"/>
    <property type="project" value="UniProtKB-KW"/>
</dbReference>
<dbReference type="GO" id="GO:0005840">
    <property type="term" value="C:ribosome"/>
    <property type="evidence" value="ECO:0007669"/>
    <property type="project" value="UniProtKB-KW"/>
</dbReference>
<dbReference type="GO" id="GO:0046872">
    <property type="term" value="F:metal ion binding"/>
    <property type="evidence" value="ECO:0007669"/>
    <property type="project" value="UniProtKB-KW"/>
</dbReference>
<dbReference type="GO" id="GO:0019843">
    <property type="term" value="F:rRNA binding"/>
    <property type="evidence" value="ECO:0007669"/>
    <property type="project" value="UniProtKB-KW"/>
</dbReference>
<dbReference type="GO" id="GO:0003735">
    <property type="term" value="F:structural constituent of ribosome"/>
    <property type="evidence" value="ECO:0007669"/>
    <property type="project" value="InterPro"/>
</dbReference>
<dbReference type="GO" id="GO:0006412">
    <property type="term" value="P:translation"/>
    <property type="evidence" value="ECO:0007669"/>
    <property type="project" value="UniProtKB-UniRule"/>
</dbReference>
<dbReference type="Gene3D" id="4.10.830.30">
    <property type="entry name" value="Ribosomal protein L31"/>
    <property type="match status" value="1"/>
</dbReference>
<dbReference type="HAMAP" id="MF_00501">
    <property type="entry name" value="Ribosomal_bL31_1"/>
    <property type="match status" value="1"/>
</dbReference>
<dbReference type="InterPro" id="IPR034704">
    <property type="entry name" value="Ribosomal_bL28/bL31-like_sf"/>
</dbReference>
<dbReference type="InterPro" id="IPR002150">
    <property type="entry name" value="Ribosomal_bL31"/>
</dbReference>
<dbReference type="InterPro" id="IPR027491">
    <property type="entry name" value="Ribosomal_bL31_A"/>
</dbReference>
<dbReference type="InterPro" id="IPR042105">
    <property type="entry name" value="Ribosomal_bL31_sf"/>
</dbReference>
<dbReference type="NCBIfam" id="TIGR00105">
    <property type="entry name" value="L31"/>
    <property type="match status" value="1"/>
</dbReference>
<dbReference type="NCBIfam" id="NF000612">
    <property type="entry name" value="PRK00019.1"/>
    <property type="match status" value="1"/>
</dbReference>
<dbReference type="NCBIfam" id="NF001809">
    <property type="entry name" value="PRK00528.1"/>
    <property type="match status" value="1"/>
</dbReference>
<dbReference type="PANTHER" id="PTHR33280">
    <property type="entry name" value="50S RIBOSOMAL PROTEIN L31, CHLOROPLASTIC"/>
    <property type="match status" value="1"/>
</dbReference>
<dbReference type="PANTHER" id="PTHR33280:SF1">
    <property type="entry name" value="LARGE RIBOSOMAL SUBUNIT PROTEIN BL31C"/>
    <property type="match status" value="1"/>
</dbReference>
<dbReference type="Pfam" id="PF01197">
    <property type="entry name" value="Ribosomal_L31"/>
    <property type="match status" value="1"/>
</dbReference>
<dbReference type="PRINTS" id="PR01249">
    <property type="entry name" value="RIBOSOMALL31"/>
</dbReference>
<dbReference type="SUPFAM" id="SSF143800">
    <property type="entry name" value="L28p-like"/>
    <property type="match status" value="1"/>
</dbReference>
<dbReference type="PROSITE" id="PS01143">
    <property type="entry name" value="RIBOSOMAL_L31"/>
    <property type="match status" value="1"/>
</dbReference>
<gene>
    <name evidence="1" type="primary">rpmE</name>
    <name type="ordered locus">CHY_2565</name>
</gene>
<organism>
    <name type="scientific">Carboxydothermus hydrogenoformans (strain ATCC BAA-161 / DSM 6008 / Z-2901)</name>
    <dbReference type="NCBI Taxonomy" id="246194"/>
    <lineage>
        <taxon>Bacteria</taxon>
        <taxon>Bacillati</taxon>
        <taxon>Bacillota</taxon>
        <taxon>Clostridia</taxon>
        <taxon>Thermoanaerobacterales</taxon>
        <taxon>Thermoanaerobacteraceae</taxon>
        <taxon>Carboxydothermus</taxon>
    </lineage>
</organism>
<feature type="chain" id="PRO_0000259172" description="Large ribosomal subunit protein bL31">
    <location>
        <begin position="1"/>
        <end position="65"/>
    </location>
</feature>
<feature type="binding site" evidence="1">
    <location>
        <position position="16"/>
    </location>
    <ligand>
        <name>Zn(2+)</name>
        <dbReference type="ChEBI" id="CHEBI:29105"/>
    </ligand>
</feature>
<feature type="binding site" evidence="1">
    <location>
        <position position="18"/>
    </location>
    <ligand>
        <name>Zn(2+)</name>
        <dbReference type="ChEBI" id="CHEBI:29105"/>
    </ligand>
</feature>
<feature type="binding site" evidence="1">
    <location>
        <position position="36"/>
    </location>
    <ligand>
        <name>Zn(2+)</name>
        <dbReference type="ChEBI" id="CHEBI:29105"/>
    </ligand>
</feature>
<feature type="binding site" evidence="1">
    <location>
        <position position="39"/>
    </location>
    <ligand>
        <name>Zn(2+)</name>
        <dbReference type="ChEBI" id="CHEBI:29105"/>
    </ligand>
</feature>
<proteinExistence type="inferred from homology"/>
<accession>Q3A926</accession>